<name>DBAD_EMENI</name>
<keyword id="KW-1003">Cell membrane</keyword>
<keyword id="KW-0325">Glycoprotein</keyword>
<keyword id="KW-0472">Membrane</keyword>
<keyword id="KW-1185">Reference proteome</keyword>
<keyword id="KW-0812">Transmembrane</keyword>
<keyword id="KW-1133">Transmembrane helix</keyword>
<keyword id="KW-0813">Transport</keyword>
<feature type="chain" id="PRO_0000446358" description="MFS-type transporter dbaD">
    <location>
        <begin position="1"/>
        <end position="444"/>
    </location>
</feature>
<feature type="transmembrane region" description="Helical" evidence="1">
    <location>
        <begin position="62"/>
        <end position="82"/>
    </location>
</feature>
<feature type="transmembrane region" description="Helical" evidence="1">
    <location>
        <begin position="107"/>
        <end position="127"/>
    </location>
</feature>
<feature type="transmembrane region" description="Helical" evidence="1">
    <location>
        <begin position="134"/>
        <end position="154"/>
    </location>
</feature>
<feature type="transmembrane region" description="Helical" evidence="1">
    <location>
        <begin position="159"/>
        <end position="179"/>
    </location>
</feature>
<feature type="transmembrane region" description="Helical" evidence="1">
    <location>
        <begin position="192"/>
        <end position="212"/>
    </location>
</feature>
<feature type="transmembrane region" description="Helical" evidence="1">
    <location>
        <begin position="223"/>
        <end position="243"/>
    </location>
</feature>
<feature type="transmembrane region" description="Helical" evidence="1">
    <location>
        <begin position="267"/>
        <end position="287"/>
    </location>
</feature>
<feature type="transmembrane region" description="Helical" evidence="1">
    <location>
        <begin position="301"/>
        <end position="323"/>
    </location>
</feature>
<feature type="transmembrane region" description="Helical" evidence="1">
    <location>
        <begin position="330"/>
        <end position="350"/>
    </location>
</feature>
<feature type="transmembrane region" description="Helical" evidence="1">
    <location>
        <begin position="356"/>
        <end position="376"/>
    </location>
</feature>
<feature type="transmembrane region" description="Helical" evidence="1">
    <location>
        <begin position="394"/>
        <end position="414"/>
    </location>
</feature>
<feature type="transmembrane region" description="Helical" evidence="1">
    <location>
        <begin position="424"/>
        <end position="444"/>
    </location>
</feature>
<feature type="region of interest" description="Disordered" evidence="3">
    <location>
        <begin position="1"/>
        <end position="57"/>
    </location>
</feature>
<feature type="compositionally biased region" description="Polar residues" evidence="3">
    <location>
        <begin position="1"/>
        <end position="13"/>
    </location>
</feature>
<feature type="compositionally biased region" description="Basic and acidic residues" evidence="3">
    <location>
        <begin position="31"/>
        <end position="44"/>
    </location>
</feature>
<feature type="compositionally biased region" description="Pro residues" evidence="3">
    <location>
        <begin position="48"/>
        <end position="57"/>
    </location>
</feature>
<feature type="glycosylation site" description="N-linked (GlcNAc...) asparagine" evidence="2">
    <location>
        <position position="8"/>
    </location>
</feature>
<feature type="glycosylation site" description="N-linked (GlcNAc...) asparagine" evidence="2">
    <location>
        <position position="421"/>
    </location>
</feature>
<accession>Q5AUY2</accession>
<accession>A0A1U8QNZ8</accession>
<accession>C8V4J8</accession>
<reference key="1">
    <citation type="journal article" date="2005" name="Nature">
        <title>Sequencing of Aspergillus nidulans and comparative analysis with A. fumigatus and A. oryzae.</title>
        <authorList>
            <person name="Galagan J.E."/>
            <person name="Calvo S.E."/>
            <person name="Cuomo C."/>
            <person name="Ma L.-J."/>
            <person name="Wortman J.R."/>
            <person name="Batzoglou S."/>
            <person name="Lee S.-I."/>
            <person name="Bastuerkmen M."/>
            <person name="Spevak C.C."/>
            <person name="Clutterbuck J."/>
            <person name="Kapitonov V."/>
            <person name="Jurka J."/>
            <person name="Scazzocchio C."/>
            <person name="Farman M.L."/>
            <person name="Butler J."/>
            <person name="Purcell S."/>
            <person name="Harris S."/>
            <person name="Braus G.H."/>
            <person name="Draht O."/>
            <person name="Busch S."/>
            <person name="D'Enfert C."/>
            <person name="Bouchier C."/>
            <person name="Goldman G.H."/>
            <person name="Bell-Pedersen D."/>
            <person name="Griffiths-Jones S."/>
            <person name="Doonan J.H."/>
            <person name="Yu J."/>
            <person name="Vienken K."/>
            <person name="Pain A."/>
            <person name="Freitag M."/>
            <person name="Selker E.U."/>
            <person name="Archer D.B."/>
            <person name="Penalva M.A."/>
            <person name="Oakley B.R."/>
            <person name="Momany M."/>
            <person name="Tanaka T."/>
            <person name="Kumagai T."/>
            <person name="Asai K."/>
            <person name="Machida M."/>
            <person name="Nierman W.C."/>
            <person name="Denning D.W."/>
            <person name="Caddick M.X."/>
            <person name="Hynes M."/>
            <person name="Paoletti M."/>
            <person name="Fischer R."/>
            <person name="Miller B.L."/>
            <person name="Dyer P.S."/>
            <person name="Sachs M.S."/>
            <person name="Osmani S.A."/>
            <person name="Birren B.W."/>
        </authorList>
    </citation>
    <scope>NUCLEOTIDE SEQUENCE [LARGE SCALE GENOMIC DNA]</scope>
    <source>
        <strain>FGSC A4 / ATCC 38163 / CBS 112.46 / NRRL 194 / M139</strain>
    </source>
</reference>
<reference key="2">
    <citation type="journal article" date="2009" name="Fungal Genet. Biol.">
        <title>The 2008 update of the Aspergillus nidulans genome annotation: a community effort.</title>
        <authorList>
            <person name="Wortman J.R."/>
            <person name="Gilsenan J.M."/>
            <person name="Joardar V."/>
            <person name="Deegan J."/>
            <person name="Clutterbuck J."/>
            <person name="Andersen M.R."/>
            <person name="Archer D."/>
            <person name="Bencina M."/>
            <person name="Braus G."/>
            <person name="Coutinho P."/>
            <person name="von Dohren H."/>
            <person name="Doonan J."/>
            <person name="Driessen A.J."/>
            <person name="Durek P."/>
            <person name="Espeso E."/>
            <person name="Fekete E."/>
            <person name="Flipphi M."/>
            <person name="Estrada C.G."/>
            <person name="Geysens S."/>
            <person name="Goldman G."/>
            <person name="de Groot P.W."/>
            <person name="Hansen K."/>
            <person name="Harris S.D."/>
            <person name="Heinekamp T."/>
            <person name="Helmstaedt K."/>
            <person name="Henrissat B."/>
            <person name="Hofmann G."/>
            <person name="Homan T."/>
            <person name="Horio T."/>
            <person name="Horiuchi H."/>
            <person name="James S."/>
            <person name="Jones M."/>
            <person name="Karaffa L."/>
            <person name="Karanyi Z."/>
            <person name="Kato M."/>
            <person name="Keller N."/>
            <person name="Kelly D.E."/>
            <person name="Kiel J.A."/>
            <person name="Kim J.M."/>
            <person name="van der Klei I.J."/>
            <person name="Klis F.M."/>
            <person name="Kovalchuk A."/>
            <person name="Krasevec N."/>
            <person name="Kubicek C.P."/>
            <person name="Liu B."/>
            <person name="Maccabe A."/>
            <person name="Meyer V."/>
            <person name="Mirabito P."/>
            <person name="Miskei M."/>
            <person name="Mos M."/>
            <person name="Mullins J."/>
            <person name="Nelson D.R."/>
            <person name="Nielsen J."/>
            <person name="Oakley B.R."/>
            <person name="Osmani S.A."/>
            <person name="Pakula T."/>
            <person name="Paszewski A."/>
            <person name="Paulsen I."/>
            <person name="Pilsyk S."/>
            <person name="Pocsi I."/>
            <person name="Punt P.J."/>
            <person name="Ram A.F."/>
            <person name="Ren Q."/>
            <person name="Robellet X."/>
            <person name="Robson G."/>
            <person name="Seiboth B."/>
            <person name="van Solingen P."/>
            <person name="Specht T."/>
            <person name="Sun J."/>
            <person name="Taheri-Talesh N."/>
            <person name="Takeshita N."/>
            <person name="Ussery D."/>
            <person name="vanKuyk P.A."/>
            <person name="Visser H."/>
            <person name="van de Vondervoort P.J."/>
            <person name="de Vries R.P."/>
            <person name="Walton J."/>
            <person name="Xiang X."/>
            <person name="Xiong Y."/>
            <person name="Zeng A.P."/>
            <person name="Brandt B.W."/>
            <person name="Cornell M.J."/>
            <person name="van den Hondel C.A."/>
            <person name="Visser J."/>
            <person name="Oliver S.G."/>
            <person name="Turner G."/>
        </authorList>
    </citation>
    <scope>GENOME REANNOTATION</scope>
    <source>
        <strain>FGSC A4 / ATCC 38163 / CBS 112.46 / NRRL 194 / M139</strain>
    </source>
</reference>
<reference key="3">
    <citation type="journal article" date="2012" name="Appl. Environ. Microbiol.">
        <title>Breaking the silence: protein stabilization uncovers silenced biosynthetic gene clusters in the fungus Aspergillus nidulans.</title>
        <authorList>
            <person name="Gerke J."/>
            <person name="Bayram O."/>
            <person name="Feussner K."/>
            <person name="Landesfeind M."/>
            <person name="Shelest E."/>
            <person name="Feussner I."/>
            <person name="Braus G.H."/>
        </authorList>
    </citation>
    <scope>IDENTIFICATION</scope>
    <scope>INDUCTION</scope>
    <scope>FUNCTION</scope>
    <scope>DISRUPTION PHENOTYPE</scope>
</reference>
<reference key="4">
    <citation type="journal article" date="2015" name="Genetics">
        <title>Beyond asexual development: modifications in the gene expression profile caused by the absence of the Aspergillus nidulans transcription factor FlbB.</title>
        <authorList>
            <person name="Oiartzabal-Arano E."/>
            <person name="Garzia A."/>
            <person name="Gorostidi A."/>
            <person name="Ugalde U."/>
            <person name="Espeso E.A."/>
            <person name="Etxebeste O."/>
        </authorList>
    </citation>
    <scope>INDUCTION</scope>
</reference>
<organism>
    <name type="scientific">Emericella nidulans (strain FGSC A4 / ATCC 38163 / CBS 112.46 / NRRL 194 / M139)</name>
    <name type="common">Aspergillus nidulans</name>
    <dbReference type="NCBI Taxonomy" id="227321"/>
    <lineage>
        <taxon>Eukaryota</taxon>
        <taxon>Fungi</taxon>
        <taxon>Dikarya</taxon>
        <taxon>Ascomycota</taxon>
        <taxon>Pezizomycotina</taxon>
        <taxon>Eurotiomycetes</taxon>
        <taxon>Eurotiomycetidae</taxon>
        <taxon>Eurotiales</taxon>
        <taxon>Aspergillaceae</taxon>
        <taxon>Aspergillus</taxon>
        <taxon>Aspergillus subgen. Nidulantes</taxon>
    </lineage>
</organism>
<proteinExistence type="evidence at transcript level"/>
<comment type="function">
    <text evidence="4 8">MFS-type transporter; part of the gene cluster that mediates the biosynthesis of the antibiotic 2,4- dihydroxy-3-methyl-6-(2-oxopropyl)benzaldehyde (DHMBA) and its derivatives (PubMed:23001671). Is probably involved in the transport of the metabolites to the environment (Probable).</text>
</comment>
<comment type="subcellular location">
    <subcellularLocation>
        <location evidence="8">Cell membrane</location>
        <topology evidence="1">Multi-pass membrane protein</topology>
    </subcellularLocation>
</comment>
<comment type="induction">
    <text evidence="4 5">Deletion of the conserved eukaryotic csnE deneddylase subunit of the COP9 signalosome leading to defect in protein degradation results in the activation of the silenced dba gene cluster (PubMed:23001671). Expression is positively regulated by the dba cluster specific transcription factor dbaA (PubMed:23001671). Expression is also controlled by the transcription factor flbB (PubMed:25701285).</text>
</comment>
<comment type="disruption phenotype">
    <text evidence="4">Strongly reduces the production of yellow pigmentation.</text>
</comment>
<comment type="similarity">
    <text evidence="7">Belongs to the major facilitator superfamily. Monocarboxylate porter (TC 2.A.1.13) family.</text>
</comment>
<sequence length="444" mass="47011">MTEQPPQNHSVDLNQNEDNNENDYRSSSATDAERPCEPKIEESTAKPPTGPPAPPPPPNGGLVAWLHVIGGFMLFFNTWGIMNAFGVFQTYYESGALFERSSSDISWIGSIQATMLLLVGFFTGSIYDRGYLRALLVVGSFCIVFGHMMLSLCKTYGQVLLAQGFCVGIGAGCLFVPCVSVLPTYFSSRLGTALGLAVSGSSMGGVIYPIVLNELIGPLGFGWSVRVIGFIALGTLLVPIAVMKQRVKPPRARALIDWSAFSDIPYMAFTLASLLAFMGLFALLFYISYFGAAKPITDTRMAFYIVPILNAASCFGRTIPNAMADKIGPFNLIAPCCLAVGVLILCLLAVTTEAGLIVIALLSGFFGGALIGLPPLCFVALTKDKTKIGTRIGMGFGMVGLGVLAGGPAGGAILSHSHHSNWTGLWVYGGVTSLVAGFIICIAV</sequence>
<protein>
    <recommendedName>
        <fullName evidence="6">MFS-type transporter dbaD</fullName>
    </recommendedName>
    <alternativeName>
        <fullName evidence="6">Derivative of benzaldehyde biosynthesis cluster protein D</fullName>
    </alternativeName>
</protein>
<gene>
    <name evidence="6" type="primary">dbaD</name>
    <name type="ORF">ANIA_07898</name>
</gene>
<dbReference type="EMBL" id="AACD01000135">
    <property type="protein sequence ID" value="EAA59552.1"/>
    <property type="molecule type" value="Genomic_DNA"/>
</dbReference>
<dbReference type="EMBL" id="BN001302">
    <property type="protein sequence ID" value="CBF73484.1"/>
    <property type="molecule type" value="Genomic_DNA"/>
</dbReference>
<dbReference type="RefSeq" id="XP_681167.1">
    <property type="nucleotide sequence ID" value="XM_676075.1"/>
</dbReference>
<dbReference type="SMR" id="Q5AUY2"/>
<dbReference type="STRING" id="227321.Q5AUY2"/>
<dbReference type="GlyCosmos" id="Q5AUY2">
    <property type="glycosylation" value="2 sites, No reported glycans"/>
</dbReference>
<dbReference type="EnsemblFungi" id="CBF73484">
    <property type="protein sequence ID" value="CBF73484"/>
    <property type="gene ID" value="ANIA_07898"/>
</dbReference>
<dbReference type="GeneID" id="2869138"/>
<dbReference type="KEGG" id="ani:ANIA_07898"/>
<dbReference type="eggNOG" id="KOG2504">
    <property type="taxonomic scope" value="Eukaryota"/>
</dbReference>
<dbReference type="HOGENOM" id="CLU_001265_1_0_1"/>
<dbReference type="InParanoid" id="Q5AUY2"/>
<dbReference type="OMA" id="MAFYIVP"/>
<dbReference type="OrthoDB" id="6509908at2759"/>
<dbReference type="Proteomes" id="UP000000560">
    <property type="component" value="Chromosome II"/>
</dbReference>
<dbReference type="GO" id="GO:0005886">
    <property type="term" value="C:plasma membrane"/>
    <property type="evidence" value="ECO:0000318"/>
    <property type="project" value="GO_Central"/>
</dbReference>
<dbReference type="GO" id="GO:0022857">
    <property type="term" value="F:transmembrane transporter activity"/>
    <property type="evidence" value="ECO:0000318"/>
    <property type="project" value="GO_Central"/>
</dbReference>
<dbReference type="Gene3D" id="1.20.1250.20">
    <property type="entry name" value="MFS general substrate transporter like domains"/>
    <property type="match status" value="2"/>
</dbReference>
<dbReference type="InterPro" id="IPR011701">
    <property type="entry name" value="MFS"/>
</dbReference>
<dbReference type="InterPro" id="IPR020846">
    <property type="entry name" value="MFS_dom"/>
</dbReference>
<dbReference type="InterPro" id="IPR036259">
    <property type="entry name" value="MFS_trans_sf"/>
</dbReference>
<dbReference type="InterPro" id="IPR050327">
    <property type="entry name" value="Proton-linked_MCT"/>
</dbReference>
<dbReference type="PANTHER" id="PTHR11360:SF234">
    <property type="entry name" value="MFS-TYPE TRANSPORTER DBAD-RELATED"/>
    <property type="match status" value="1"/>
</dbReference>
<dbReference type="PANTHER" id="PTHR11360">
    <property type="entry name" value="MONOCARBOXYLATE TRANSPORTER"/>
    <property type="match status" value="1"/>
</dbReference>
<dbReference type="Pfam" id="PF07690">
    <property type="entry name" value="MFS_1"/>
    <property type="match status" value="1"/>
</dbReference>
<dbReference type="SUPFAM" id="SSF103473">
    <property type="entry name" value="MFS general substrate transporter"/>
    <property type="match status" value="1"/>
</dbReference>
<dbReference type="PROSITE" id="PS50850">
    <property type="entry name" value="MFS"/>
    <property type="match status" value="1"/>
</dbReference>
<evidence type="ECO:0000255" key="1"/>
<evidence type="ECO:0000255" key="2">
    <source>
        <dbReference type="PROSITE-ProRule" id="PRU00498"/>
    </source>
</evidence>
<evidence type="ECO:0000256" key="3">
    <source>
        <dbReference type="SAM" id="MobiDB-lite"/>
    </source>
</evidence>
<evidence type="ECO:0000269" key="4">
    <source>
    </source>
</evidence>
<evidence type="ECO:0000269" key="5">
    <source>
    </source>
</evidence>
<evidence type="ECO:0000303" key="6">
    <source>
    </source>
</evidence>
<evidence type="ECO:0000305" key="7"/>
<evidence type="ECO:0000305" key="8">
    <source>
    </source>
</evidence>